<dbReference type="EMBL" id="CH902617">
    <property type="protein sequence ID" value="EDV41487.1"/>
    <property type="status" value="ALT_SEQ"/>
    <property type="molecule type" value="Genomic_DNA"/>
</dbReference>
<dbReference type="SMR" id="B3LVF9"/>
<dbReference type="FunCoup" id="B3LVF9">
    <property type="interactions" value="2"/>
</dbReference>
<dbReference type="STRING" id="7217.B3LVF9"/>
<dbReference type="GlyCosmos" id="B3LVF9">
    <property type="glycosylation" value="3 sites, No reported glycans"/>
</dbReference>
<dbReference type="GeneID" id="6500269"/>
<dbReference type="KEGG" id="dan:6500269"/>
<dbReference type="InParanoid" id="B3LVF9"/>
<dbReference type="OrthoDB" id="7867455at2759"/>
<dbReference type="Proteomes" id="UP000007801">
    <property type="component" value="Unassembled WGS sequence"/>
</dbReference>
<dbReference type="GO" id="GO:0007291">
    <property type="term" value="P:sperm individualization"/>
    <property type="evidence" value="ECO:0000250"/>
    <property type="project" value="UniProtKB"/>
</dbReference>
<dbReference type="InterPro" id="IPR031397">
    <property type="entry name" value="Soti"/>
</dbReference>
<dbReference type="Pfam" id="PF17079">
    <property type="entry name" value="SOTI"/>
    <property type="match status" value="1"/>
</dbReference>
<comment type="function">
    <text evidence="1">Post-meiotically transcribed gene that has a role in late spermiogenesis; required for actin cone progression during spermatid individualization.</text>
</comment>
<comment type="similarity">
    <text evidence="3">Belongs to the male-specific scotti family.</text>
</comment>
<comment type="sequence caution" evidence="3">
    <conflict type="erroneous gene model prediction">
        <sequence resource="EMBL-CDS" id="EDV41487"/>
    </conflict>
</comment>
<sequence length="167" mass="18882">MEVVDPEDRDPDDMLLIDRIGDAVAGDAGNDSDSQEEQLEHQVLEQQLAHHQAHHPLRRDNRHVAMLLDAPLEPPPMGLFEGARAGGVAHPRPPARSKKRSFFTIVRPTVLRNQRPELCPLFLNASRAIGEVREEQRGEFFAEYLFENMTSENYPNGVGLPHHWGQL</sequence>
<proteinExistence type="inferred from homology"/>
<reference evidence="4" key="1">
    <citation type="journal article" date="2007" name="Nature">
        <title>Evolution of genes and genomes on the Drosophila phylogeny.</title>
        <authorList>
            <consortium name="Drosophila 12 genomes consortium"/>
        </authorList>
    </citation>
    <scope>NUCLEOTIDE SEQUENCE [LARGE SCALE GENOMIC DNA]</scope>
    <source>
        <strain evidence="4">Tucson 14024-0371.13</strain>
    </source>
</reference>
<name>SOTI_DROAN</name>
<keyword id="KW-0217">Developmental protein</keyword>
<keyword id="KW-0221">Differentiation</keyword>
<keyword id="KW-0325">Glycoprotein</keyword>
<keyword id="KW-1185">Reference proteome</keyword>
<keyword id="KW-0744">Spermatogenesis</keyword>
<gene>
    <name evidence="1" type="primary">soti</name>
    <name type="ORF">GF17485</name>
</gene>
<feature type="chain" id="PRO_0000379440" description="Male-specific protein scotti">
    <location>
        <begin position="1"/>
        <end position="167"/>
    </location>
</feature>
<feature type="glycosylation site" description="N-linked (GlcNAc...) asparagine" evidence="2">
    <location>
        <position position="30"/>
    </location>
</feature>
<feature type="glycosylation site" description="N-linked (GlcNAc...) asparagine" evidence="2">
    <location>
        <position position="124"/>
    </location>
</feature>
<feature type="glycosylation site" description="N-linked (GlcNAc...) asparagine" evidence="2">
    <location>
        <position position="148"/>
    </location>
</feature>
<protein>
    <recommendedName>
        <fullName evidence="1">Male-specific protein scotti</fullName>
    </recommendedName>
</protein>
<organism>
    <name type="scientific">Drosophila ananassae</name>
    <name type="common">Fruit fly</name>
    <dbReference type="NCBI Taxonomy" id="7217"/>
    <lineage>
        <taxon>Eukaryota</taxon>
        <taxon>Metazoa</taxon>
        <taxon>Ecdysozoa</taxon>
        <taxon>Arthropoda</taxon>
        <taxon>Hexapoda</taxon>
        <taxon>Insecta</taxon>
        <taxon>Pterygota</taxon>
        <taxon>Neoptera</taxon>
        <taxon>Endopterygota</taxon>
        <taxon>Diptera</taxon>
        <taxon>Brachycera</taxon>
        <taxon>Muscomorpha</taxon>
        <taxon>Ephydroidea</taxon>
        <taxon>Drosophilidae</taxon>
        <taxon>Drosophila</taxon>
        <taxon>Sophophora</taxon>
    </lineage>
</organism>
<evidence type="ECO:0000250" key="1">
    <source>
        <dbReference type="UniProtKB" id="Q9VFK3"/>
    </source>
</evidence>
<evidence type="ECO:0000255" key="2"/>
<evidence type="ECO:0000305" key="3"/>
<evidence type="ECO:0000312" key="4">
    <source>
        <dbReference type="EMBL" id="EDV41487.1"/>
    </source>
</evidence>
<accession>B3LVF9</accession>